<comment type="function">
    <text evidence="2">Catalyzes the ATP- and formate-dependent formylation of 5-aminoimidazole-4-carboxamide-1-beta-d-ribofuranosyl 5'-monophosphate (AICAR) to 5-formaminoimidazole-4-carboxamide-1-beta-d-ribofuranosyl 5'-monophosphate (FAICAR) in the absence of folates.</text>
</comment>
<comment type="catalytic activity">
    <reaction evidence="2">
        <text>5-amino-1-(5-phospho-beta-D-ribosyl)imidazole-4-carboxamide + formate + ATP = 5-formamido-1-(5-phospho-D-ribosyl)imidazole-4-carboxamide + ADP + phosphate</text>
        <dbReference type="Rhea" id="RHEA:24836"/>
        <dbReference type="ChEBI" id="CHEBI:15740"/>
        <dbReference type="ChEBI" id="CHEBI:30616"/>
        <dbReference type="ChEBI" id="CHEBI:43474"/>
        <dbReference type="ChEBI" id="CHEBI:58467"/>
        <dbReference type="ChEBI" id="CHEBI:58475"/>
        <dbReference type="ChEBI" id="CHEBI:456216"/>
        <dbReference type="EC" id="6.3.4.23"/>
    </reaction>
</comment>
<comment type="cofactor">
    <cofactor evidence="1">
        <name>Mg(2+)</name>
        <dbReference type="ChEBI" id="CHEBI:18420"/>
    </cofactor>
    <cofactor evidence="1">
        <name>Mn(2+)</name>
        <dbReference type="ChEBI" id="CHEBI:29035"/>
    </cofactor>
    <text evidence="1">Binds 1 Mg(2+) or Mn(2+) ion per subunit.</text>
</comment>
<comment type="pathway">
    <text evidence="2">Purine metabolism; IMP biosynthesis via de novo pathway; 5-formamido-1-(5-phospho-D-ribosyl)imidazole-4-carboxamide from 5-amino-1-(5-phospho-D-ribosyl)imidazole-4-carboxamide (formate route): step 1/1.</text>
</comment>
<comment type="similarity">
    <text evidence="2">Belongs to the phosphohexose mutase family.</text>
</comment>
<protein>
    <recommendedName>
        <fullName evidence="2">5-formaminoimidazole-4-carboxamide-1-(beta)-D-ribofuranosyl 5'-monophosphate synthetase</fullName>
        <ecNumber evidence="2">6.3.4.23</ecNumber>
    </recommendedName>
    <alternativeName>
        <fullName evidence="2">5-aminoimidazole-4-carboxamide-1-beta-D-ribofuranosyl 5'-monophosphate--formate ligase</fullName>
    </alternativeName>
</protein>
<accession>B1YBN2</accession>
<reference key="1">
    <citation type="submission" date="2008-03" db="EMBL/GenBank/DDBJ databases">
        <title>Complete sequence of Thermoproteus neutrophilus V24Sta.</title>
        <authorList>
            <consortium name="US DOE Joint Genome Institute"/>
            <person name="Copeland A."/>
            <person name="Lucas S."/>
            <person name="Lapidus A."/>
            <person name="Glavina del Rio T."/>
            <person name="Dalin E."/>
            <person name="Tice H."/>
            <person name="Bruce D."/>
            <person name="Goodwin L."/>
            <person name="Pitluck S."/>
            <person name="Sims D."/>
            <person name="Brettin T."/>
            <person name="Detter J.C."/>
            <person name="Han C."/>
            <person name="Kuske C.R."/>
            <person name="Schmutz J."/>
            <person name="Larimer F."/>
            <person name="Land M."/>
            <person name="Hauser L."/>
            <person name="Kyrpides N."/>
            <person name="Mikhailova N."/>
            <person name="Biddle J.F."/>
            <person name="Zhang Z."/>
            <person name="Fitz-Gibbon S.T."/>
            <person name="Lowe T.M."/>
            <person name="Saltikov C."/>
            <person name="House C.H."/>
            <person name="Richardson P."/>
        </authorList>
    </citation>
    <scope>NUCLEOTIDE SEQUENCE [LARGE SCALE GENOMIC DNA]</scope>
    <source>
        <strain>DSM 2338 / JCM 9278 / NBRC 100436 / V24Sta</strain>
    </source>
</reference>
<proteinExistence type="inferred from homology"/>
<keyword id="KW-0067">ATP-binding</keyword>
<keyword id="KW-0436">Ligase</keyword>
<keyword id="KW-0460">Magnesium</keyword>
<keyword id="KW-0464">Manganese</keyword>
<keyword id="KW-0479">Metal-binding</keyword>
<keyword id="KW-0547">Nucleotide-binding</keyword>
<keyword id="KW-0658">Purine biosynthesis</keyword>
<organism>
    <name type="scientific">Pyrobaculum neutrophilum (strain DSM 2338 / JCM 9278 / NBRC 100436 / V24Sta)</name>
    <name type="common">Thermoproteus neutrophilus</name>
    <dbReference type="NCBI Taxonomy" id="444157"/>
    <lineage>
        <taxon>Archaea</taxon>
        <taxon>Thermoproteota</taxon>
        <taxon>Thermoprotei</taxon>
        <taxon>Thermoproteales</taxon>
        <taxon>Thermoproteaceae</taxon>
        <taxon>Pyrobaculum</taxon>
    </lineage>
</organism>
<dbReference type="EC" id="6.3.4.23" evidence="2"/>
<dbReference type="EMBL" id="CP001014">
    <property type="protein sequence ID" value="ACB40834.1"/>
    <property type="molecule type" value="Genomic_DNA"/>
</dbReference>
<dbReference type="SMR" id="B1YBN2"/>
<dbReference type="STRING" id="444157.Tneu_1919"/>
<dbReference type="KEGG" id="tne:Tneu_1919"/>
<dbReference type="eggNOG" id="arCOG04346">
    <property type="taxonomic scope" value="Archaea"/>
</dbReference>
<dbReference type="HOGENOM" id="CLU_065084_0_0_2"/>
<dbReference type="UniPathway" id="UPA00074">
    <property type="reaction ID" value="UER00134"/>
</dbReference>
<dbReference type="Proteomes" id="UP000001694">
    <property type="component" value="Chromosome"/>
</dbReference>
<dbReference type="GO" id="GO:0005524">
    <property type="term" value="F:ATP binding"/>
    <property type="evidence" value="ECO:0007669"/>
    <property type="project" value="UniProtKB-KW"/>
</dbReference>
<dbReference type="GO" id="GO:0016879">
    <property type="term" value="F:ligase activity, forming carbon-nitrogen bonds"/>
    <property type="evidence" value="ECO:0007669"/>
    <property type="project" value="UniProtKB-UniRule"/>
</dbReference>
<dbReference type="GO" id="GO:0000287">
    <property type="term" value="F:magnesium ion binding"/>
    <property type="evidence" value="ECO:0007669"/>
    <property type="project" value="InterPro"/>
</dbReference>
<dbReference type="GO" id="GO:0006189">
    <property type="term" value="P:'de novo' IMP biosynthetic process"/>
    <property type="evidence" value="ECO:0007669"/>
    <property type="project" value="UniProtKB-UniRule"/>
</dbReference>
<dbReference type="Gene3D" id="3.40.50.20">
    <property type="match status" value="1"/>
</dbReference>
<dbReference type="Gene3D" id="3.30.1490.20">
    <property type="entry name" value="ATP-grasp fold, A domain"/>
    <property type="match status" value="1"/>
</dbReference>
<dbReference type="Gene3D" id="3.30.470.20">
    <property type="entry name" value="ATP-grasp fold, B domain"/>
    <property type="match status" value="1"/>
</dbReference>
<dbReference type="HAMAP" id="MF_01163">
    <property type="entry name" value="IMP_biosynth_PurP"/>
    <property type="match status" value="1"/>
</dbReference>
<dbReference type="InterPro" id="IPR011761">
    <property type="entry name" value="ATP-grasp"/>
</dbReference>
<dbReference type="InterPro" id="IPR013815">
    <property type="entry name" value="ATP_grasp_subdomain_1"/>
</dbReference>
<dbReference type="InterPro" id="IPR023656">
    <property type="entry name" value="IMP_biosynth_PurP"/>
</dbReference>
<dbReference type="InterPro" id="IPR009720">
    <property type="entry name" value="IMP_biosynth_PurP_C"/>
</dbReference>
<dbReference type="InterPro" id="IPR010672">
    <property type="entry name" value="IMP_biosynth_PurP_N"/>
</dbReference>
<dbReference type="InterPro" id="IPR016185">
    <property type="entry name" value="PreATP-grasp_dom_sf"/>
</dbReference>
<dbReference type="PANTHER" id="PTHR38147:SF2">
    <property type="entry name" value="5-FORMAMINOIMIDAZOLE-4-CARBOXAMIDE-1-(BETA)-D-RIBOFURANOSYL 5'-MONOPHOSPHATE SYNTHETASE"/>
    <property type="match status" value="1"/>
</dbReference>
<dbReference type="PANTHER" id="PTHR38147">
    <property type="entry name" value="5-FORMAMINOIMIDAZOLE-4-CARBOXAMIDE-1-(BETA)-D-RIBOFURANOSYL 5'-MONOPHOSPHATE SYNTHETASE-RELATED"/>
    <property type="match status" value="1"/>
</dbReference>
<dbReference type="Pfam" id="PF06849">
    <property type="entry name" value="DUF1246"/>
    <property type="match status" value="1"/>
</dbReference>
<dbReference type="Pfam" id="PF06973">
    <property type="entry name" value="DUF1297"/>
    <property type="match status" value="1"/>
</dbReference>
<dbReference type="PIRSF" id="PIRSF004602">
    <property type="entry name" value="ATPgrasp_PurP"/>
    <property type="match status" value="1"/>
</dbReference>
<dbReference type="SUPFAM" id="SSF56059">
    <property type="entry name" value="Glutathione synthetase ATP-binding domain-like"/>
    <property type="match status" value="1"/>
</dbReference>
<dbReference type="SUPFAM" id="SSF52440">
    <property type="entry name" value="PreATP-grasp domain"/>
    <property type="match status" value="1"/>
</dbReference>
<dbReference type="PROSITE" id="PS50975">
    <property type="entry name" value="ATP_GRASP"/>
    <property type="match status" value="1"/>
</dbReference>
<name>PURP_PYRNV</name>
<sequence length="344" mass="38885">MLISGANPTHVSAALKRYDVEKLAVATVASHTALQILRGAKRFGFRTIAVAGRADAAEFYRQFGFIDEVWTADFRNFVKTAEKLVEANAVLVPHGSYVEYVGWRQALEAPVPTLGCRELIRWEADQYKKMELLQRAGVPTPRVYKTPEEVDRPVIVKLFGAKGGRGYFLARDREELRRRLAGLGEYIIQEYVFGVPAYYHFFSSPVYGRVEVFGADIRYESNVDGRTFGWVEPTFVVVGNLPLVLRESLLPTIWKYGVQFAKAVEEAVGCRLAGPYCLESIIRDDMSISVFEFSGRIVAGTNIYMGYGSPYSVLYFDRPMDMGERIAHEIREAARRGRLEDLFT</sequence>
<evidence type="ECO:0000250" key="1"/>
<evidence type="ECO:0000255" key="2">
    <source>
        <dbReference type="HAMAP-Rule" id="MF_01163"/>
    </source>
</evidence>
<gene>
    <name evidence="2" type="primary">purP</name>
    <name type="ordered locus">Tneu_1919</name>
</gene>
<feature type="chain" id="PRO_0000348642" description="5-formaminoimidazole-4-carboxamide-1-(beta)-D-ribofuranosyl 5'-monophosphate synthetase">
    <location>
        <begin position="1"/>
        <end position="344"/>
    </location>
</feature>
<feature type="domain" description="ATP-grasp" evidence="2">
    <location>
        <begin position="130"/>
        <end position="324"/>
    </location>
</feature>
<feature type="binding site" evidence="2">
    <location>
        <position position="31"/>
    </location>
    <ligand>
        <name>5-amino-1-(5-phospho-beta-D-ribosyl)imidazole-4-carboxamide</name>
        <dbReference type="ChEBI" id="CHEBI:58475"/>
    </ligand>
</feature>
<feature type="binding site" evidence="2">
    <location>
        <position position="96"/>
    </location>
    <ligand>
        <name>5-amino-1-(5-phospho-beta-D-ribosyl)imidazole-4-carboxamide</name>
        <dbReference type="ChEBI" id="CHEBI:58475"/>
    </ligand>
</feature>
<feature type="binding site" evidence="2">
    <location>
        <begin position="153"/>
        <end position="198"/>
    </location>
    <ligand>
        <name>ATP</name>
        <dbReference type="ChEBI" id="CHEBI:30616"/>
    </ligand>
</feature>
<feature type="binding site" evidence="2">
    <location>
        <position position="220"/>
    </location>
    <ligand>
        <name>ATP</name>
        <dbReference type="ChEBI" id="CHEBI:30616"/>
    </ligand>
</feature>
<feature type="binding site" evidence="2">
    <location>
        <position position="240"/>
    </location>
    <ligand>
        <name>5-amino-1-(5-phospho-beta-D-ribosyl)imidazole-4-carboxamide</name>
        <dbReference type="ChEBI" id="CHEBI:58475"/>
    </ligand>
</feature>
<feature type="binding site" evidence="2">
    <location>
        <position position="279"/>
    </location>
    <ligand>
        <name>Mg(2+)</name>
        <dbReference type="ChEBI" id="CHEBI:18420"/>
    </ligand>
</feature>
<feature type="binding site" evidence="2">
    <location>
        <position position="292"/>
    </location>
    <ligand>
        <name>Mg(2+)</name>
        <dbReference type="ChEBI" id="CHEBI:18420"/>
    </ligand>
</feature>